<proteinExistence type="evidence at protein level"/>
<reference key="1">
    <citation type="journal article" date="1994" name="J. Bacteriol.">
        <title>Two different dihydroorotate dehydrogenases in Lactococcus lactis.</title>
        <authorList>
            <person name="Andersen P.S."/>
            <person name="Jansen P.J.G."/>
            <person name="Hammer K."/>
        </authorList>
    </citation>
    <scope>NUCLEOTIDE SEQUENCE [GENOMIC DNA]</scope>
    <scope>FUNCTION</scope>
    <scope>CATALYTIC ACTIVITY</scope>
    <scope>SUBSTRATE SPECIFICITY</scope>
    <source>
        <strain>MG1363</strain>
    </source>
</reference>
<reference key="2">
    <citation type="journal article" date="2007" name="J. Bacteriol.">
        <title>The complete genome sequence of the lactic acid bacterial paradigm Lactococcus lactis subsp. cremoris MG1363.</title>
        <authorList>
            <person name="Wegmann U."/>
            <person name="O'Connell-Motherway M."/>
            <person name="Zomer A."/>
            <person name="Buist G."/>
            <person name="Shearman C."/>
            <person name="Canchaya C."/>
            <person name="Ventura M."/>
            <person name="Goesmann A."/>
            <person name="Gasson M.J."/>
            <person name="Kuipers O.P."/>
            <person name="van Sinderen D."/>
            <person name="Kok J."/>
        </authorList>
    </citation>
    <scope>NUCLEOTIDE SEQUENCE [LARGE SCALE GENOMIC DNA]</scope>
    <source>
        <strain>MG1363</strain>
    </source>
</reference>
<reference key="3">
    <citation type="journal article" date="1997" name="Biochemistry">
        <title>Active site of dihydroorotate dehydrogenase A from Lactococcus lactis investigated by chemical modification and mutagenesis.</title>
        <authorList>
            <person name="Bjoernberg O."/>
            <person name="Rowland P."/>
            <person name="Larsen S."/>
            <person name="Jensen K.F."/>
        </authorList>
    </citation>
    <scope>MUTAGENESIS OF LYS-43; CYS-130; ASN-132 AND LYS-164</scope>
    <source>
        <strain>MG1363</strain>
    </source>
</reference>
<reference key="4">
    <citation type="journal article" date="1997" name="Structure">
        <title>The crystal structure of the flavin containing enzyme dihydroorotate dehydrogenase A from Lactococcus lactis.</title>
        <authorList>
            <person name="Rowland P."/>
            <person name="Nielsen F.S."/>
            <person name="Jensen K.F."/>
            <person name="Larsen S."/>
        </authorList>
    </citation>
    <scope>X-RAY CRYSTALLOGRAPHY (2.0 ANGSTROMS) IN COMPLEX WITH FMN</scope>
    <scope>COFACTOR</scope>
    <scope>SUBUNIT</scope>
    <source>
        <strain>MG1363</strain>
    </source>
</reference>
<reference key="5">
    <citation type="journal article" date="1998" name="Protein Sci.">
        <title>The crystal structure of Lactococcus lactis dihydroorotate dehydrogenase A complexed with the enzyme reaction product throws light on its enzymatic function.</title>
        <authorList>
            <person name="Rowland P."/>
            <person name="Bjoernberg O."/>
            <person name="Nielsen F.S."/>
            <person name="Jensen K.F."/>
            <person name="Larsen S."/>
        </authorList>
    </citation>
    <scope>X-RAY CRYSTALLOGRAPHY (2.0 ANGSTROMS) IN COMPLEX WITH FMN AND OROTATE</scope>
    <scope>COFACTOR</scope>
    <scope>REACTION MECHANISM</scope>
    <source>
        <strain>MG1363</strain>
    </source>
</reference>
<reference key="6">
    <citation type="journal article" date="2003" name="J. Biol. Chem.">
        <title>Lactococcus lactis dihydroorotate dehydrogenase A mutants reveal important facets of the enzymatic function.</title>
        <authorList>
            <person name="Noerager S."/>
            <person name="Arent S."/>
            <person name="Bjoernberg O."/>
            <person name="Ottosen M."/>
            <person name="Lo Leggio L."/>
            <person name="Jensen K.F."/>
            <person name="Larsen S."/>
        </authorList>
    </citation>
    <scope>X-RAY CRYSTALLOGRAPHY (1.7 ANGSTROMS) OF WILD-TYPE AND MUTANTS ALA-56; ARG-56; ALA-67; LYS-136 AND GLU-213 IN COMPLEXES WITH FMN AND SUBSTRATE</scope>
    <scope>MUTAGENESIS OF ARG-50; PRO-56; ARG-57; ASN-67; ASN-127; SER-129; PRO-131; ASN-132; LYS-136; ASN-193 AND LYS-213</scope>
    <scope>BIOPHYSICOCHEMICAL PROPERTIES</scope>
    <source>
        <strain>MG1363</strain>
    </source>
</reference>
<gene>
    <name type="primary">pyrDA</name>
    <name type="ordered locus">llmg_0952</name>
</gene>
<dbReference type="EC" id="1.3.98.1"/>
<dbReference type="EMBL" id="X74206">
    <property type="protein sequence ID" value="CAA52279.1"/>
    <property type="molecule type" value="Genomic_DNA"/>
</dbReference>
<dbReference type="EMBL" id="AM406671">
    <property type="protein sequence ID" value="CAL97544.1"/>
    <property type="molecule type" value="Genomic_DNA"/>
</dbReference>
<dbReference type="RefSeq" id="WP_011834894.1">
    <property type="nucleotide sequence ID" value="NC_009004.1"/>
</dbReference>
<dbReference type="PDB" id="1DOR">
    <property type="method" value="X-ray"/>
    <property type="resolution" value="2.00 A"/>
    <property type="chains" value="A/B=1-311"/>
</dbReference>
<dbReference type="PDB" id="1JQV">
    <property type="method" value="X-ray"/>
    <property type="resolution" value="2.10 A"/>
    <property type="chains" value="A/B=1-311"/>
</dbReference>
<dbReference type="PDB" id="1JQX">
    <property type="method" value="X-ray"/>
    <property type="resolution" value="1.70 A"/>
    <property type="chains" value="A/B=1-311"/>
</dbReference>
<dbReference type="PDB" id="1JRB">
    <property type="method" value="X-ray"/>
    <property type="resolution" value="1.90 A"/>
    <property type="chains" value="A/B=1-311"/>
</dbReference>
<dbReference type="PDB" id="1JRC">
    <property type="method" value="X-ray"/>
    <property type="resolution" value="1.80 A"/>
    <property type="chains" value="A/B=1-311"/>
</dbReference>
<dbReference type="PDB" id="1JUB">
    <property type="method" value="X-ray"/>
    <property type="resolution" value="1.40 A"/>
    <property type="chains" value="A/B=1-311"/>
</dbReference>
<dbReference type="PDB" id="1JUE">
    <property type="method" value="X-ray"/>
    <property type="resolution" value="1.80 A"/>
    <property type="chains" value="A/B=1-311"/>
</dbReference>
<dbReference type="PDB" id="1OVD">
    <property type="method" value="X-ray"/>
    <property type="resolution" value="2.25 A"/>
    <property type="chains" value="A/B=1-311"/>
</dbReference>
<dbReference type="PDB" id="2BSL">
    <property type="method" value="X-ray"/>
    <property type="resolution" value="2.30 A"/>
    <property type="chains" value="A/B=1-311"/>
</dbReference>
<dbReference type="PDB" id="2BX7">
    <property type="method" value="X-ray"/>
    <property type="resolution" value="2.04 A"/>
    <property type="chains" value="A/B=1-311"/>
</dbReference>
<dbReference type="PDB" id="2DOR">
    <property type="method" value="X-ray"/>
    <property type="resolution" value="2.00 A"/>
    <property type="chains" value="A/B=1-311"/>
</dbReference>
<dbReference type="PDBsum" id="1DOR"/>
<dbReference type="PDBsum" id="1JQV"/>
<dbReference type="PDBsum" id="1JQX"/>
<dbReference type="PDBsum" id="1JRB"/>
<dbReference type="PDBsum" id="1JRC"/>
<dbReference type="PDBsum" id="1JUB"/>
<dbReference type="PDBsum" id="1JUE"/>
<dbReference type="PDBsum" id="1OVD"/>
<dbReference type="PDBsum" id="2BSL"/>
<dbReference type="PDBsum" id="2BX7"/>
<dbReference type="PDBsum" id="2DOR"/>
<dbReference type="SMR" id="A2RJT9"/>
<dbReference type="STRING" id="416870.llmg_0952"/>
<dbReference type="KEGG" id="llm:llmg_0952"/>
<dbReference type="eggNOG" id="COG0167">
    <property type="taxonomic scope" value="Bacteria"/>
</dbReference>
<dbReference type="HOGENOM" id="CLU_042042_3_0_9"/>
<dbReference type="OrthoDB" id="9794954at2"/>
<dbReference type="PhylomeDB" id="A2RJT9"/>
<dbReference type="BRENDA" id="1.3.1.14">
    <property type="organism ID" value="2903"/>
</dbReference>
<dbReference type="UniPathway" id="UPA00070"/>
<dbReference type="EvolutionaryTrace" id="A2RJT9"/>
<dbReference type="Proteomes" id="UP000000364">
    <property type="component" value="Chromosome"/>
</dbReference>
<dbReference type="GO" id="GO:0005737">
    <property type="term" value="C:cytoplasm"/>
    <property type="evidence" value="ECO:0007669"/>
    <property type="project" value="UniProtKB-SubCell"/>
</dbReference>
<dbReference type="GO" id="GO:1990663">
    <property type="term" value="F:dihydroorotate dehydrogenase (fumarate) activity"/>
    <property type="evidence" value="ECO:0007669"/>
    <property type="project" value="UniProtKB-EC"/>
</dbReference>
<dbReference type="GO" id="GO:0006207">
    <property type="term" value="P:'de novo' pyrimidine nucleobase biosynthetic process"/>
    <property type="evidence" value="ECO:0007669"/>
    <property type="project" value="InterPro"/>
</dbReference>
<dbReference type="GO" id="GO:0044205">
    <property type="term" value="P:'de novo' UMP biosynthetic process"/>
    <property type="evidence" value="ECO:0007669"/>
    <property type="project" value="UniProtKB-UniRule"/>
</dbReference>
<dbReference type="CDD" id="cd04741">
    <property type="entry name" value="DHOD_1A_like"/>
    <property type="match status" value="1"/>
</dbReference>
<dbReference type="FunFam" id="3.20.20.70:FF:000027">
    <property type="entry name" value="Dihydropyrimidine dehydrogenase [NADP(+)]"/>
    <property type="match status" value="1"/>
</dbReference>
<dbReference type="Gene3D" id="3.20.20.70">
    <property type="entry name" value="Aldolase class I"/>
    <property type="match status" value="1"/>
</dbReference>
<dbReference type="Gene3D" id="2.30.26.10">
    <property type="entry name" value="Dihydroorotate Dehydrogenase A, chain A, domain 2"/>
    <property type="match status" value="1"/>
</dbReference>
<dbReference type="HAMAP" id="MF_00224">
    <property type="entry name" value="DHO_dh_type1"/>
    <property type="match status" value="1"/>
</dbReference>
<dbReference type="InterPro" id="IPR013785">
    <property type="entry name" value="Aldolase_TIM"/>
</dbReference>
<dbReference type="InterPro" id="IPR050074">
    <property type="entry name" value="DHO_dehydrogenase"/>
</dbReference>
<dbReference type="InterPro" id="IPR033886">
    <property type="entry name" value="DHOD_1A"/>
</dbReference>
<dbReference type="InterPro" id="IPR023359">
    <property type="entry name" value="Dihydro_DH_chainA_dom2"/>
</dbReference>
<dbReference type="InterPro" id="IPR024920">
    <property type="entry name" value="Dihydroorotate_DH_1"/>
</dbReference>
<dbReference type="InterPro" id="IPR012135">
    <property type="entry name" value="Dihydroorotate_DH_1_2"/>
</dbReference>
<dbReference type="InterPro" id="IPR005720">
    <property type="entry name" value="Dihydroorotate_DH_cat"/>
</dbReference>
<dbReference type="InterPro" id="IPR001295">
    <property type="entry name" value="Dihydroorotate_DH_CS"/>
</dbReference>
<dbReference type="NCBIfam" id="NF002702">
    <property type="entry name" value="PRK02506.1"/>
    <property type="match status" value="1"/>
</dbReference>
<dbReference type="PANTHER" id="PTHR48109:SF1">
    <property type="entry name" value="DIHYDROOROTATE DEHYDROGENASE (FUMARATE)"/>
    <property type="match status" value="1"/>
</dbReference>
<dbReference type="PANTHER" id="PTHR48109">
    <property type="entry name" value="DIHYDROOROTATE DEHYDROGENASE (QUINONE), MITOCHONDRIAL-RELATED"/>
    <property type="match status" value="1"/>
</dbReference>
<dbReference type="Pfam" id="PF01180">
    <property type="entry name" value="DHO_dh"/>
    <property type="match status" value="1"/>
</dbReference>
<dbReference type="PIRSF" id="PIRSF000164">
    <property type="entry name" value="DHO_oxidase"/>
    <property type="match status" value="1"/>
</dbReference>
<dbReference type="SUPFAM" id="SSF51395">
    <property type="entry name" value="FMN-linked oxidoreductases"/>
    <property type="match status" value="1"/>
</dbReference>
<dbReference type="PROSITE" id="PS00911">
    <property type="entry name" value="DHODEHASE_1"/>
    <property type="match status" value="1"/>
</dbReference>
<dbReference type="PROSITE" id="PS00912">
    <property type="entry name" value="DHODEHASE_2"/>
    <property type="match status" value="1"/>
</dbReference>
<protein>
    <recommendedName>
        <fullName>Dihydroorotate dehydrogenase A (fumarate)</fullName>
        <shortName>DHOD A</shortName>
        <shortName>DHODase A</shortName>
        <shortName>DHOdehase A</shortName>
        <ecNumber>1.3.98.1</ecNumber>
    </recommendedName>
</protein>
<accession>A2RJT9</accession>
<accession>P54321</accession>
<organism>
    <name type="scientific">Lactococcus lactis subsp. cremoris (strain MG1363)</name>
    <dbReference type="NCBI Taxonomy" id="416870"/>
    <lineage>
        <taxon>Bacteria</taxon>
        <taxon>Bacillati</taxon>
        <taxon>Bacillota</taxon>
        <taxon>Bacilli</taxon>
        <taxon>Lactobacillales</taxon>
        <taxon>Streptococcaceae</taxon>
        <taxon>Lactococcus</taxon>
        <taxon>Lactococcus cremoris subsp. cremoris</taxon>
    </lineage>
</organism>
<comment type="function">
    <text evidence="3">Catalyzes the conversion of dihydroorotate to orotate with fumarate as the electron acceptor. Molecular oxygen can replace fumarate in vitro, but cannot use NAD(+) as an electron acceptor.</text>
</comment>
<comment type="catalytic activity">
    <reaction evidence="3">
        <text>(S)-dihydroorotate + fumarate = orotate + succinate</text>
        <dbReference type="Rhea" id="RHEA:30059"/>
        <dbReference type="ChEBI" id="CHEBI:29806"/>
        <dbReference type="ChEBI" id="CHEBI:30031"/>
        <dbReference type="ChEBI" id="CHEBI:30839"/>
        <dbReference type="ChEBI" id="CHEBI:30864"/>
        <dbReference type="EC" id="1.3.98.1"/>
    </reaction>
</comment>
<comment type="cofactor">
    <cofactor evidence="4 6">
        <name>FMN</name>
        <dbReference type="ChEBI" id="CHEBI:58210"/>
    </cofactor>
    <text evidence="4 6">Binds 1 FMN per subunit.</text>
</comment>
<comment type="biophysicochemical properties">
    <kinetics>
        <KM evidence="2">18 uM for dihydroorotate</KM>
        <KM evidence="2">250 uM for fumarate</KM>
        <Vmax evidence="2">18.6 umol/min/mg enzyme</Vmax>
    </kinetics>
</comment>
<comment type="pathway">
    <text>Pyrimidine metabolism; UMP biosynthesis via de novo pathway.</text>
</comment>
<comment type="subunit">
    <text evidence="4 6">Homodimer.</text>
</comment>
<comment type="subcellular location">
    <subcellularLocation>
        <location evidence="1">Cytoplasm</location>
    </subcellularLocation>
</comment>
<comment type="similarity">
    <text evidence="7">Belongs to the dihydroorotate dehydrogenase family. Type 1 subfamily.</text>
</comment>
<keyword id="KW-0002">3D-structure</keyword>
<keyword id="KW-0963">Cytoplasm</keyword>
<keyword id="KW-0285">Flavoprotein</keyword>
<keyword id="KW-0288">FMN</keyword>
<keyword id="KW-0560">Oxidoreductase</keyword>
<keyword id="KW-0665">Pyrimidine biosynthesis</keyword>
<sequence>MLNTTFANAKFANPFMNASGVHCMTIEDLEELKASQAGAYITKSSTLEKREGNPLPRYVDLELGSINSMGLPNLGFDYYLDYVLKNQKENAQEGPIFFSIAGMSAAENIAMLKKIQESDFSGITELNLSCPNVPGKPQLAYDFEATEKLLKEVFTFFTKPLGVKLPPYFDLVHFDIMAEILNQFPLTYVNSVNSIGNGLFIDPEAESVVIKPKDGFGGIGGAYIKPTALANVRAFYTRLKPEIQIIGTGGIETGQDAFEHLLCGATMLQIGTALHKEGPAIFDRIIKELEEIMNQKGYQSIADFHGKLKSL</sequence>
<feature type="chain" id="PRO_0000285239" description="Dihydroorotate dehydrogenase A (fumarate)">
    <location>
        <begin position="1"/>
        <end position="311"/>
    </location>
</feature>
<feature type="active site" description="Nucleophile">
    <location>
        <position position="130"/>
    </location>
</feature>
<feature type="binding site" evidence="4 6">
    <location>
        <position position="19"/>
    </location>
    <ligand>
        <name>FMN</name>
        <dbReference type="ChEBI" id="CHEBI:58210"/>
    </ligand>
</feature>
<feature type="binding site" evidence="4 6">
    <location>
        <begin position="43"/>
        <end position="44"/>
    </location>
    <ligand>
        <name>FMN</name>
        <dbReference type="ChEBI" id="CHEBI:58210"/>
    </ligand>
</feature>
<feature type="binding site">
    <location>
        <position position="43"/>
    </location>
    <ligand>
        <name>substrate</name>
    </ligand>
</feature>
<feature type="binding site">
    <location>
        <begin position="67"/>
        <end position="71"/>
    </location>
    <ligand>
        <name>substrate</name>
    </ligand>
</feature>
<feature type="binding site" evidence="4 6">
    <location>
        <position position="127"/>
    </location>
    <ligand>
        <name>FMN</name>
        <dbReference type="ChEBI" id="CHEBI:58210"/>
    </ligand>
</feature>
<feature type="binding site">
    <location>
        <position position="127"/>
    </location>
    <ligand>
        <name>substrate</name>
    </ligand>
</feature>
<feature type="binding site" evidence="4 6">
    <location>
        <position position="164"/>
    </location>
    <ligand>
        <name>FMN</name>
        <dbReference type="ChEBI" id="CHEBI:58210"/>
    </ligand>
</feature>
<feature type="binding site" evidence="4 6">
    <location>
        <position position="192"/>
    </location>
    <ligand>
        <name>FMN</name>
        <dbReference type="ChEBI" id="CHEBI:58210"/>
    </ligand>
</feature>
<feature type="binding site">
    <location>
        <begin position="193"/>
        <end position="194"/>
    </location>
    <ligand>
        <name>substrate</name>
    </ligand>
</feature>
<feature type="binding site" evidence="4 6">
    <location>
        <position position="221"/>
    </location>
    <ligand>
        <name>FMN</name>
        <dbReference type="ChEBI" id="CHEBI:58210"/>
    </ligand>
</feature>
<feature type="binding site" evidence="4 6">
    <location>
        <begin position="249"/>
        <end position="250"/>
    </location>
    <ligand>
        <name>FMN</name>
        <dbReference type="ChEBI" id="CHEBI:58210"/>
    </ligand>
</feature>
<feature type="binding site" evidence="4 6">
    <location>
        <begin position="271"/>
        <end position="272"/>
    </location>
    <ligand>
        <name>FMN</name>
        <dbReference type="ChEBI" id="CHEBI:58210"/>
    </ligand>
</feature>
<feature type="mutagenesis site" description="More than 500-fold reduction of enzymatic activity with oxygen or DCIP as electron acceptor." evidence="5">
    <original>K</original>
    <variation>A</variation>
    <location>
        <position position="43"/>
    </location>
</feature>
<feature type="mutagenesis site" description="40-fold reduction of enzymatic activity with oxygen as electron acceptor; more than 120-fold reduction with DCIP as electron acceptor." evidence="5">
    <original>K</original>
    <variation>E</variation>
    <location>
        <position position="43"/>
    </location>
</feature>
<feature type="mutagenesis site" description="Steady state kinetics comparable to wild-type; 3-fold decrease in flavin bleaching rate." evidence="2">
    <original>R</original>
    <variation>E</variation>
    <location>
        <position position="50"/>
    </location>
</feature>
<feature type="mutagenesis site" description="More than 500-fold reduction of enzymatic activity." evidence="2">
    <original>P</original>
    <variation>A</variation>
    <location>
        <position position="56"/>
    </location>
</feature>
<feature type="mutagenesis site" description="More active than wild-type, especially with 2,6-dichloroindophenol as electron acceptor." evidence="2">
    <original>R</original>
    <variation>A</variation>
    <location>
        <position position="57"/>
    </location>
</feature>
<feature type="mutagenesis site" description="100-fold lower affinity for dihydroorotate." evidence="2">
    <original>N</original>
    <variation>A</variation>
    <location>
        <position position="67"/>
    </location>
</feature>
<feature type="mutagenesis site" description="70-fold lower affinity for dihydroorotate; inhibited by milimolar concentrations of fumarate." evidence="2">
    <original>N</original>
    <variation>A</variation>
    <location>
        <position position="127"/>
    </location>
</feature>
<feature type="mutagenesis site" description="6-fold lower enzymatic activity with fumarate as electron acceptor." evidence="2">
    <original>S</original>
    <variation>A</variation>
    <location>
        <position position="129"/>
    </location>
</feature>
<feature type="mutagenesis site" description="Almost total loss of activity with oxygen or 2,6-dichloroindophenol as electron acceptor." evidence="5">
    <original>C</original>
    <variation>A</variation>
    <variation>S</variation>
    <location>
        <position position="130"/>
    </location>
</feature>
<feature type="mutagenesis site" description="4.5-fold lower enzymatic activity with fumarate and 2,6-dichloroindophenol as electron acceptor." evidence="2">
    <original>P</original>
    <variation>A</variation>
    <location>
        <position position="131"/>
    </location>
</feature>
<feature type="mutagenesis site" description="54-fold reduction of enzymatic activity with oxygen as electron acceptor; more than 250-fold reduction with 2,6-dichloroindophenol as electron acceptor." evidence="2 5">
    <original>N</original>
    <variation>A</variation>
    <location>
        <position position="132"/>
    </location>
</feature>
<feature type="mutagenesis site" description="Slightly higher affinity to dihydroorotate; 2-fold decrease in flavin bleaching rate." evidence="2">
    <original>K</original>
    <variation>A</variation>
    <location>
        <position position="136"/>
    </location>
</feature>
<feature type="mutagenesis site" description="Almost total loss of activity with oxygen or 2,6-dichloroindophenol as electron acceptor." evidence="5">
    <original>K</original>
    <variation>A</variation>
    <location>
        <position position="164"/>
    </location>
</feature>
<feature type="mutagenesis site" description="500-fold lower affinity for dihydroorotate; inhibited by milimolar concentrations of fumarate." evidence="2">
    <original>N</original>
    <variation>A</variation>
    <location>
        <position position="193"/>
    </location>
</feature>
<feature type="mutagenesis site" description="7-fold decrease in enzymatic activity; 50-fold decrease in flavin bleaching rate." evidence="2">
    <original>K</original>
    <variation>A</variation>
    <location>
        <position position="213"/>
    </location>
</feature>
<feature type="strand" evidence="8">
    <location>
        <begin position="4"/>
        <end position="6"/>
    </location>
</feature>
<feature type="strand" evidence="8">
    <location>
        <begin position="9"/>
        <end position="17"/>
    </location>
</feature>
<feature type="helix" evidence="8">
    <location>
        <begin position="26"/>
        <end position="34"/>
    </location>
</feature>
<feature type="strand" evidence="8">
    <location>
        <begin position="58"/>
        <end position="61"/>
    </location>
</feature>
<feature type="strand" evidence="8">
    <location>
        <begin position="64"/>
        <end position="67"/>
    </location>
</feature>
<feature type="helix" evidence="8">
    <location>
        <begin position="76"/>
        <end position="89"/>
    </location>
</feature>
<feature type="strand" evidence="8">
    <location>
        <begin position="92"/>
        <end position="94"/>
    </location>
</feature>
<feature type="strand" evidence="8">
    <location>
        <begin position="97"/>
        <end position="100"/>
    </location>
</feature>
<feature type="helix" evidence="8">
    <location>
        <begin position="105"/>
        <end position="117"/>
    </location>
</feature>
<feature type="strand" evidence="8">
    <location>
        <begin position="122"/>
        <end position="128"/>
    </location>
</feature>
<feature type="strand" evidence="8">
    <location>
        <begin position="133"/>
        <end position="135"/>
    </location>
</feature>
<feature type="helix" evidence="8">
    <location>
        <begin position="139"/>
        <end position="141"/>
    </location>
</feature>
<feature type="helix" evidence="8">
    <location>
        <begin position="143"/>
        <end position="153"/>
    </location>
</feature>
<feature type="turn" evidence="8">
    <location>
        <begin position="154"/>
        <end position="156"/>
    </location>
</feature>
<feature type="strand" evidence="8">
    <location>
        <begin position="161"/>
        <end position="165"/>
    </location>
</feature>
<feature type="helix" evidence="8">
    <location>
        <begin position="171"/>
        <end position="181"/>
    </location>
</feature>
<feature type="strand" evidence="8">
    <location>
        <begin position="188"/>
        <end position="191"/>
    </location>
</feature>
<feature type="strand" evidence="8">
    <location>
        <begin position="195"/>
        <end position="199"/>
    </location>
</feature>
<feature type="turn" evidence="8">
    <location>
        <begin position="203"/>
        <end position="206"/>
    </location>
</feature>
<feature type="strand" evidence="8">
    <location>
        <begin position="207"/>
        <end position="209"/>
    </location>
</feature>
<feature type="helix" evidence="8">
    <location>
        <begin position="212"/>
        <end position="215"/>
    </location>
</feature>
<feature type="strand" evidence="8">
    <location>
        <begin position="216"/>
        <end position="221"/>
    </location>
</feature>
<feature type="helix" evidence="8">
    <location>
        <begin position="222"/>
        <end position="224"/>
    </location>
</feature>
<feature type="helix" evidence="8">
    <location>
        <begin position="225"/>
        <end position="236"/>
    </location>
</feature>
<feature type="strand" evidence="8">
    <location>
        <begin position="243"/>
        <end position="250"/>
    </location>
</feature>
<feature type="helix" evidence="8">
    <location>
        <begin position="254"/>
        <end position="263"/>
    </location>
</feature>
<feature type="strand" evidence="8">
    <location>
        <begin position="266"/>
        <end position="270"/>
    </location>
</feature>
<feature type="helix" evidence="8">
    <location>
        <begin position="272"/>
        <end position="277"/>
    </location>
</feature>
<feature type="helix" evidence="8">
    <location>
        <begin position="281"/>
        <end position="296"/>
    </location>
</feature>
<feature type="helix" evidence="8">
    <location>
        <begin position="301"/>
        <end position="303"/>
    </location>
</feature>
<feature type="turn" evidence="8">
    <location>
        <begin position="304"/>
        <end position="306"/>
    </location>
</feature>
<name>PYRDA_LACLM</name>
<evidence type="ECO:0000250" key="1"/>
<evidence type="ECO:0000269" key="2">
    <source>
    </source>
</evidence>
<evidence type="ECO:0000269" key="3">
    <source>
    </source>
</evidence>
<evidence type="ECO:0000269" key="4">
    <source>
    </source>
</evidence>
<evidence type="ECO:0000269" key="5">
    <source>
    </source>
</evidence>
<evidence type="ECO:0000269" key="6">
    <source>
    </source>
</evidence>
<evidence type="ECO:0000305" key="7"/>
<evidence type="ECO:0007829" key="8">
    <source>
        <dbReference type="PDB" id="1JUB"/>
    </source>
</evidence>